<gene>
    <name evidence="1" type="primary">pdaD</name>
    <name type="ordered locus">PH1609</name>
</gene>
<sequence>MTWITPKKAIMLAAAAEGGTKLNAFDNALLKMGIGNVNLVKLSSVIPAHIEWLDELPKNIPIGMLLPTVYAHIESDEPGSTISAALGVGISEGNEGGLIYEYAGYCKREEAEDMVRKMVEEGFKVRGWKLKEFKVVSAEITVKEKPAAAVAAVIMFPY</sequence>
<keyword id="KW-0210">Decarboxylase</keyword>
<keyword id="KW-0456">Lyase</keyword>
<keyword id="KW-0670">Pyruvate</keyword>
<reference key="1">
    <citation type="journal article" date="1998" name="DNA Res.">
        <title>Complete sequence and gene organization of the genome of a hyper-thermophilic archaebacterium, Pyrococcus horikoshii OT3.</title>
        <authorList>
            <person name="Kawarabayasi Y."/>
            <person name="Sawada M."/>
            <person name="Horikawa H."/>
            <person name="Haikawa Y."/>
            <person name="Hino Y."/>
            <person name="Yamamoto S."/>
            <person name="Sekine M."/>
            <person name="Baba S."/>
            <person name="Kosugi H."/>
            <person name="Hosoyama A."/>
            <person name="Nagai Y."/>
            <person name="Sakai M."/>
            <person name="Ogura K."/>
            <person name="Otsuka R."/>
            <person name="Nakazawa H."/>
            <person name="Takamiya M."/>
            <person name="Ohfuku Y."/>
            <person name="Funahashi T."/>
            <person name="Tanaka T."/>
            <person name="Kudoh Y."/>
            <person name="Yamazaki J."/>
            <person name="Kushida N."/>
            <person name="Oguchi A."/>
            <person name="Aoki K."/>
            <person name="Yoshizawa T."/>
            <person name="Nakamura Y."/>
            <person name="Robb F.T."/>
            <person name="Horikoshi K."/>
            <person name="Masuchi Y."/>
            <person name="Shizuya H."/>
            <person name="Kikuchi H."/>
        </authorList>
    </citation>
    <scope>NUCLEOTIDE SEQUENCE [LARGE SCALE GENOMIC DNA]</scope>
    <source>
        <strain>ATCC 700860 / DSM 12428 / JCM 9974 / NBRC 100139 / OT-3</strain>
    </source>
</reference>
<protein>
    <recommendedName>
        <fullName evidence="1">Pyruvoyl-dependent arginine decarboxylase</fullName>
        <shortName evidence="1">PvlArgDC</shortName>
        <ecNumber evidence="1">4.1.1.19</ecNumber>
    </recommendedName>
    <component>
        <recommendedName>
            <fullName evidence="1">Pyruvoyl-dependent arginine decarboxylase subunit beta</fullName>
        </recommendedName>
    </component>
    <component>
        <recommendedName>
            <fullName evidence="1">Pyruvoyl-dependent arginine decarboxylase subunit alpha</fullName>
        </recommendedName>
    </component>
</protein>
<accession>O59240</accession>
<comment type="catalytic activity">
    <reaction evidence="1">
        <text>L-arginine + H(+) = agmatine + CO2</text>
        <dbReference type="Rhea" id="RHEA:17641"/>
        <dbReference type="ChEBI" id="CHEBI:15378"/>
        <dbReference type="ChEBI" id="CHEBI:16526"/>
        <dbReference type="ChEBI" id="CHEBI:32682"/>
        <dbReference type="ChEBI" id="CHEBI:58145"/>
        <dbReference type="EC" id="4.1.1.19"/>
    </reaction>
</comment>
<comment type="cofactor">
    <cofactor evidence="1">
        <name>pyruvate</name>
        <dbReference type="ChEBI" id="CHEBI:15361"/>
    </cofactor>
    <text evidence="1">Binds 1 pyruvoyl group covalently per subunit.</text>
</comment>
<comment type="similarity">
    <text evidence="1">Belongs to the PdaD family.</text>
</comment>
<organism>
    <name type="scientific">Pyrococcus horikoshii (strain ATCC 700860 / DSM 12428 / JCM 9974 / NBRC 100139 / OT-3)</name>
    <dbReference type="NCBI Taxonomy" id="70601"/>
    <lineage>
        <taxon>Archaea</taxon>
        <taxon>Methanobacteriati</taxon>
        <taxon>Methanobacteriota</taxon>
        <taxon>Thermococci</taxon>
        <taxon>Thermococcales</taxon>
        <taxon>Thermococcaceae</taxon>
        <taxon>Pyrococcus</taxon>
    </lineage>
</organism>
<feature type="chain" id="PRO_0000023332" description="Pyruvoyl-dependent arginine decarboxylase subunit beta" evidence="1">
    <location>
        <begin position="1"/>
        <end position="43"/>
    </location>
</feature>
<feature type="chain" id="PRO_0000023333" description="Pyruvoyl-dependent arginine decarboxylase subunit alpha" evidence="1">
    <location>
        <begin position="44"/>
        <end position="158"/>
    </location>
</feature>
<feature type="site" description="Cleavage (non-hydrolytic)" evidence="1">
    <location>
        <begin position="43"/>
        <end position="44"/>
    </location>
</feature>
<feature type="modified residue" description="Pyruvic acid (Ser)" evidence="1">
    <location>
        <position position="44"/>
    </location>
</feature>
<proteinExistence type="inferred from homology"/>
<evidence type="ECO:0000255" key="1">
    <source>
        <dbReference type="HAMAP-Rule" id="MF_01404"/>
    </source>
</evidence>
<dbReference type="EC" id="4.1.1.19" evidence="1"/>
<dbReference type="EMBL" id="BA000001">
    <property type="protein sequence ID" value="BAA30721.1"/>
    <property type="molecule type" value="Genomic_DNA"/>
</dbReference>
<dbReference type="PIR" id="A71040">
    <property type="entry name" value="A71040"/>
</dbReference>
<dbReference type="RefSeq" id="WP_010885682.1">
    <property type="nucleotide sequence ID" value="NC_000961.1"/>
</dbReference>
<dbReference type="SMR" id="O59240"/>
<dbReference type="STRING" id="70601.gene:9378599"/>
<dbReference type="EnsemblBacteria" id="BAA30721">
    <property type="protein sequence ID" value="BAA30721"/>
    <property type="gene ID" value="BAA30721"/>
</dbReference>
<dbReference type="GeneID" id="1442461"/>
<dbReference type="KEGG" id="pho:PH1609"/>
<dbReference type="eggNOG" id="arCOG04490">
    <property type="taxonomic scope" value="Archaea"/>
</dbReference>
<dbReference type="OrthoDB" id="30748at2157"/>
<dbReference type="Proteomes" id="UP000000752">
    <property type="component" value="Chromosome"/>
</dbReference>
<dbReference type="GO" id="GO:0008792">
    <property type="term" value="F:arginine decarboxylase activity"/>
    <property type="evidence" value="ECO:0007669"/>
    <property type="project" value="UniProtKB-UniRule"/>
</dbReference>
<dbReference type="GO" id="GO:0006527">
    <property type="term" value="P:arginine catabolic process"/>
    <property type="evidence" value="ECO:0007669"/>
    <property type="project" value="InterPro"/>
</dbReference>
<dbReference type="Gene3D" id="3.30.60.30">
    <property type="match status" value="1"/>
</dbReference>
<dbReference type="Gene3D" id="3.50.20.10">
    <property type="entry name" value="Pyruvoyl-Dependent Histidine Decarboxylase, subunit B"/>
    <property type="match status" value="1"/>
</dbReference>
<dbReference type="HAMAP" id="MF_01404">
    <property type="entry name" value="PvlArgDC"/>
    <property type="match status" value="1"/>
</dbReference>
<dbReference type="InterPro" id="IPR016104">
    <property type="entry name" value="Pyr-dep_his/arg-deCO2ase"/>
</dbReference>
<dbReference type="InterPro" id="IPR016105">
    <property type="entry name" value="Pyr-dep_his/arg-deCO2ase_sand"/>
</dbReference>
<dbReference type="InterPro" id="IPR002724">
    <property type="entry name" value="Pyruvoyl-dep_arg_deCO2ase"/>
</dbReference>
<dbReference type="NCBIfam" id="TIGR00286">
    <property type="entry name" value="pyruvoyl-dependent arginine decarboxylase"/>
    <property type="match status" value="1"/>
</dbReference>
<dbReference type="PANTHER" id="PTHR40438">
    <property type="entry name" value="PYRUVOYL-DEPENDENT ARGININE DECARBOXYLASE"/>
    <property type="match status" value="1"/>
</dbReference>
<dbReference type="PANTHER" id="PTHR40438:SF1">
    <property type="entry name" value="PYRUVOYL-DEPENDENT ARGININE DECARBOXYLASE"/>
    <property type="match status" value="1"/>
</dbReference>
<dbReference type="Pfam" id="PF01862">
    <property type="entry name" value="PvlArgDC"/>
    <property type="match status" value="1"/>
</dbReference>
<dbReference type="PIRSF" id="PIRSF005216">
    <property type="entry name" value="Pyruvoyl-dep_arg_deCO2ase"/>
    <property type="match status" value="1"/>
</dbReference>
<dbReference type="SFLD" id="SFLDF00471">
    <property type="entry name" value="Pyruvoyl-dependent_arginine_de"/>
    <property type="match status" value="1"/>
</dbReference>
<dbReference type="SFLD" id="SFLDG01170">
    <property type="entry name" value="Pyruvoyl-dependent_arginine_de"/>
    <property type="match status" value="1"/>
</dbReference>
<dbReference type="SFLD" id="SFLDS00055">
    <property type="entry name" value="Pyruvoyl-Dependent_Histidine/A"/>
    <property type="match status" value="1"/>
</dbReference>
<dbReference type="SUPFAM" id="SSF56271">
    <property type="entry name" value="Pyruvoyl-dependent histidine and arginine decarboxylases"/>
    <property type="match status" value="1"/>
</dbReference>
<name>PDAD_PYRHO</name>